<evidence type="ECO:0000255" key="1">
    <source>
        <dbReference type="HAMAP-Rule" id="MF_00102"/>
    </source>
</evidence>
<evidence type="ECO:0000305" key="2"/>
<keyword id="KW-0028">Amino-acid biosynthesis</keyword>
<keyword id="KW-0963">Cytoplasm</keyword>
<keyword id="KW-0220">Diaminopimelate biosynthesis</keyword>
<keyword id="KW-0457">Lysine biosynthesis</keyword>
<keyword id="KW-0520">NAD</keyword>
<keyword id="KW-0521">NADP</keyword>
<keyword id="KW-0560">Oxidoreductase</keyword>
<comment type="function">
    <text evidence="1">Catalyzes the conversion of 4-hydroxy-tetrahydrodipicolinate (HTPA) to tetrahydrodipicolinate.</text>
</comment>
<comment type="catalytic activity">
    <reaction evidence="1">
        <text>(S)-2,3,4,5-tetrahydrodipicolinate + NAD(+) + H2O = (2S,4S)-4-hydroxy-2,3,4,5-tetrahydrodipicolinate + NADH + H(+)</text>
        <dbReference type="Rhea" id="RHEA:35323"/>
        <dbReference type="ChEBI" id="CHEBI:15377"/>
        <dbReference type="ChEBI" id="CHEBI:15378"/>
        <dbReference type="ChEBI" id="CHEBI:16845"/>
        <dbReference type="ChEBI" id="CHEBI:57540"/>
        <dbReference type="ChEBI" id="CHEBI:57945"/>
        <dbReference type="ChEBI" id="CHEBI:67139"/>
        <dbReference type="EC" id="1.17.1.8"/>
    </reaction>
</comment>
<comment type="catalytic activity">
    <reaction evidence="1">
        <text>(S)-2,3,4,5-tetrahydrodipicolinate + NADP(+) + H2O = (2S,4S)-4-hydroxy-2,3,4,5-tetrahydrodipicolinate + NADPH + H(+)</text>
        <dbReference type="Rhea" id="RHEA:35331"/>
        <dbReference type="ChEBI" id="CHEBI:15377"/>
        <dbReference type="ChEBI" id="CHEBI:15378"/>
        <dbReference type="ChEBI" id="CHEBI:16845"/>
        <dbReference type="ChEBI" id="CHEBI:57783"/>
        <dbReference type="ChEBI" id="CHEBI:58349"/>
        <dbReference type="ChEBI" id="CHEBI:67139"/>
        <dbReference type="EC" id="1.17.1.8"/>
    </reaction>
</comment>
<comment type="pathway">
    <text evidence="1">Amino-acid biosynthesis; L-lysine biosynthesis via DAP pathway; (S)-tetrahydrodipicolinate from L-aspartate: step 4/4.</text>
</comment>
<comment type="subcellular location">
    <subcellularLocation>
        <location evidence="1">Cytoplasm</location>
    </subcellularLocation>
</comment>
<comment type="similarity">
    <text evidence="1">Belongs to the DapB family.</text>
</comment>
<comment type="caution">
    <text evidence="2">Was originally thought to be a dihydrodipicolinate reductase (DHDPR), catalyzing the conversion of dihydrodipicolinate to tetrahydrodipicolinate. However, it was shown in E.coli that the substrate of the enzymatic reaction is not dihydrodipicolinate (DHDP) but in fact (2S,4S)-4-hydroxy-2,3,4,5-tetrahydrodipicolinic acid (HTPA), the product released by the DapA-catalyzed reaction.</text>
</comment>
<dbReference type="EC" id="1.17.1.8" evidence="1"/>
<dbReference type="EMBL" id="CP000562">
    <property type="protein sequence ID" value="ABN57386.1"/>
    <property type="molecule type" value="Genomic_DNA"/>
</dbReference>
<dbReference type="RefSeq" id="WP_011844297.1">
    <property type="nucleotide sequence ID" value="NC_009051.1"/>
</dbReference>
<dbReference type="SMR" id="A3CVI6"/>
<dbReference type="STRING" id="368407.Memar_1457"/>
<dbReference type="GeneID" id="4846598"/>
<dbReference type="GeneID" id="76729526"/>
<dbReference type="KEGG" id="mem:Memar_1457"/>
<dbReference type="eggNOG" id="arCOG04393">
    <property type="taxonomic scope" value="Archaea"/>
</dbReference>
<dbReference type="HOGENOM" id="CLU_047479_2_1_2"/>
<dbReference type="OrthoDB" id="195035at2157"/>
<dbReference type="UniPathway" id="UPA00034">
    <property type="reaction ID" value="UER00018"/>
</dbReference>
<dbReference type="Proteomes" id="UP000002146">
    <property type="component" value="Chromosome"/>
</dbReference>
<dbReference type="GO" id="GO:0005737">
    <property type="term" value="C:cytoplasm"/>
    <property type="evidence" value="ECO:0007669"/>
    <property type="project" value="UniProtKB-SubCell"/>
</dbReference>
<dbReference type="GO" id="GO:0008839">
    <property type="term" value="F:4-hydroxy-tetrahydrodipicolinate reductase"/>
    <property type="evidence" value="ECO:0007669"/>
    <property type="project" value="UniProtKB-EC"/>
</dbReference>
<dbReference type="GO" id="GO:0051287">
    <property type="term" value="F:NAD binding"/>
    <property type="evidence" value="ECO:0007669"/>
    <property type="project" value="UniProtKB-UniRule"/>
</dbReference>
<dbReference type="GO" id="GO:0050661">
    <property type="term" value="F:NADP binding"/>
    <property type="evidence" value="ECO:0007669"/>
    <property type="project" value="UniProtKB-UniRule"/>
</dbReference>
<dbReference type="GO" id="GO:0016726">
    <property type="term" value="F:oxidoreductase activity, acting on CH or CH2 groups, NAD or NADP as acceptor"/>
    <property type="evidence" value="ECO:0007669"/>
    <property type="project" value="UniProtKB-UniRule"/>
</dbReference>
<dbReference type="GO" id="GO:0019877">
    <property type="term" value="P:diaminopimelate biosynthetic process"/>
    <property type="evidence" value="ECO:0007669"/>
    <property type="project" value="UniProtKB-UniRule"/>
</dbReference>
<dbReference type="GO" id="GO:0009089">
    <property type="term" value="P:lysine biosynthetic process via diaminopimelate"/>
    <property type="evidence" value="ECO:0007669"/>
    <property type="project" value="UniProtKB-UniRule"/>
</dbReference>
<dbReference type="CDD" id="cd02274">
    <property type="entry name" value="DHDPR_N"/>
    <property type="match status" value="1"/>
</dbReference>
<dbReference type="Gene3D" id="3.30.360.10">
    <property type="entry name" value="Dihydrodipicolinate Reductase, domain 2"/>
    <property type="match status" value="1"/>
</dbReference>
<dbReference type="Gene3D" id="3.40.50.720">
    <property type="entry name" value="NAD(P)-binding Rossmann-like Domain"/>
    <property type="match status" value="1"/>
</dbReference>
<dbReference type="HAMAP" id="MF_00102">
    <property type="entry name" value="DapB"/>
    <property type="match status" value="1"/>
</dbReference>
<dbReference type="InterPro" id="IPR022663">
    <property type="entry name" value="DapB_C"/>
</dbReference>
<dbReference type="InterPro" id="IPR000846">
    <property type="entry name" value="DapB_N"/>
</dbReference>
<dbReference type="InterPro" id="IPR022664">
    <property type="entry name" value="DapB_N_CS"/>
</dbReference>
<dbReference type="InterPro" id="IPR023940">
    <property type="entry name" value="DHDPR_bac"/>
</dbReference>
<dbReference type="InterPro" id="IPR036291">
    <property type="entry name" value="NAD(P)-bd_dom_sf"/>
</dbReference>
<dbReference type="NCBIfam" id="TIGR00036">
    <property type="entry name" value="dapB"/>
    <property type="match status" value="1"/>
</dbReference>
<dbReference type="PANTHER" id="PTHR20836:SF0">
    <property type="entry name" value="4-HYDROXY-TETRAHYDRODIPICOLINATE REDUCTASE 1, CHLOROPLASTIC-RELATED"/>
    <property type="match status" value="1"/>
</dbReference>
<dbReference type="PANTHER" id="PTHR20836">
    <property type="entry name" value="DIHYDRODIPICOLINATE REDUCTASE"/>
    <property type="match status" value="1"/>
</dbReference>
<dbReference type="Pfam" id="PF05173">
    <property type="entry name" value="DapB_C"/>
    <property type="match status" value="1"/>
</dbReference>
<dbReference type="Pfam" id="PF01113">
    <property type="entry name" value="DapB_N"/>
    <property type="match status" value="1"/>
</dbReference>
<dbReference type="PIRSF" id="PIRSF000161">
    <property type="entry name" value="DHPR"/>
    <property type="match status" value="1"/>
</dbReference>
<dbReference type="SUPFAM" id="SSF55347">
    <property type="entry name" value="Glyceraldehyde-3-phosphate dehydrogenase-like, C-terminal domain"/>
    <property type="match status" value="1"/>
</dbReference>
<dbReference type="SUPFAM" id="SSF51735">
    <property type="entry name" value="NAD(P)-binding Rossmann-fold domains"/>
    <property type="match status" value="1"/>
</dbReference>
<dbReference type="PROSITE" id="PS01298">
    <property type="entry name" value="DAPB"/>
    <property type="match status" value="1"/>
</dbReference>
<feature type="chain" id="PRO_1000008591" description="4-hydroxy-tetrahydrodipicolinate reductase">
    <location>
        <begin position="1"/>
        <end position="252"/>
    </location>
</feature>
<feature type="active site" description="Proton donor/acceptor" evidence="1">
    <location>
        <position position="146"/>
    </location>
</feature>
<feature type="active site" description="Proton donor" evidence="1">
    <location>
        <position position="150"/>
    </location>
</feature>
<feature type="binding site" evidence="1">
    <location>
        <begin position="8"/>
        <end position="13"/>
    </location>
    <ligand>
        <name>NAD(+)</name>
        <dbReference type="ChEBI" id="CHEBI:57540"/>
    </ligand>
</feature>
<feature type="binding site" evidence="1">
    <location>
        <position position="36"/>
    </location>
    <ligand>
        <name>NADP(+)</name>
        <dbReference type="ChEBI" id="CHEBI:58349"/>
    </ligand>
</feature>
<feature type="binding site" evidence="1">
    <location>
        <begin position="89"/>
        <end position="91"/>
    </location>
    <ligand>
        <name>NAD(+)</name>
        <dbReference type="ChEBI" id="CHEBI:57540"/>
    </ligand>
</feature>
<feature type="binding site" evidence="1">
    <location>
        <begin position="114"/>
        <end position="117"/>
    </location>
    <ligand>
        <name>NAD(+)</name>
        <dbReference type="ChEBI" id="CHEBI:57540"/>
    </ligand>
</feature>
<feature type="binding site" evidence="1">
    <location>
        <position position="147"/>
    </location>
    <ligand>
        <name>(S)-2,3,4,5-tetrahydrodipicolinate</name>
        <dbReference type="ChEBI" id="CHEBI:16845"/>
    </ligand>
</feature>
<feature type="binding site" evidence="1">
    <location>
        <begin position="156"/>
        <end position="157"/>
    </location>
    <ligand>
        <name>(S)-2,3,4,5-tetrahydrodipicolinate</name>
        <dbReference type="ChEBI" id="CHEBI:16845"/>
    </ligand>
</feature>
<accession>A3CVI6</accession>
<organism>
    <name type="scientific">Methanoculleus marisnigri (strain ATCC 35101 / DSM 1498 / JR1)</name>
    <dbReference type="NCBI Taxonomy" id="368407"/>
    <lineage>
        <taxon>Archaea</taxon>
        <taxon>Methanobacteriati</taxon>
        <taxon>Methanobacteriota</taxon>
        <taxon>Stenosarchaea group</taxon>
        <taxon>Methanomicrobia</taxon>
        <taxon>Methanomicrobiales</taxon>
        <taxon>Methanomicrobiaceae</taxon>
        <taxon>Methanoculleus</taxon>
    </lineage>
</organism>
<name>DAPB_METMJ</name>
<gene>
    <name evidence="1" type="primary">dapB</name>
    <name type="ordered locus">Memar_1457</name>
</gene>
<protein>
    <recommendedName>
        <fullName evidence="1">4-hydroxy-tetrahydrodipicolinate reductase</fullName>
        <shortName evidence="1">HTPA reductase</shortName>
        <ecNumber evidence="1">1.17.1.8</ecNumber>
    </recommendedName>
</protein>
<sequence>MVKVVVSGALGRMGTNIGRIVDEAPDMELVGGIDVREGTLFKTEVVPAAKIDAFLNEKKPDVLIDFTVAGAAVENIKAAARNGVALIVGTTGFSPEQRETIAAAVEGNVPAVISSNFSVGVNIFWKLVREAARELGDYDVEVTEAHHRYKKDAPSGTAKTILEILDQELGSREKAYGRVGETERKDEIGVHVIRGGDIVGDHSVLFAGNFECIEVSHRAYDRAVFAQGAVRAARWVVGREPRIYGMQDVLGL</sequence>
<proteinExistence type="inferred from homology"/>
<reference key="1">
    <citation type="journal article" date="2009" name="Stand. Genomic Sci.">
        <title>Complete genome sequence of Methanoculleus marisnigri Romesser et al. 1981 type strain JR1.</title>
        <authorList>
            <person name="Anderson I.J."/>
            <person name="Sieprawska-Lupa M."/>
            <person name="Lapidus A."/>
            <person name="Nolan M."/>
            <person name="Copeland A."/>
            <person name="Glavina Del Rio T."/>
            <person name="Tice H."/>
            <person name="Dalin E."/>
            <person name="Barry K."/>
            <person name="Saunders E."/>
            <person name="Han C."/>
            <person name="Brettin T."/>
            <person name="Detter J.C."/>
            <person name="Bruce D."/>
            <person name="Mikhailova N."/>
            <person name="Pitluck S."/>
            <person name="Hauser L."/>
            <person name="Land M."/>
            <person name="Lucas S."/>
            <person name="Richardson P."/>
            <person name="Whitman W.B."/>
            <person name="Kyrpides N.C."/>
        </authorList>
    </citation>
    <scope>NUCLEOTIDE SEQUENCE [LARGE SCALE GENOMIC DNA]</scope>
    <source>
        <strain>ATCC 35101 / DSM 1498 / JR1</strain>
    </source>
</reference>